<organism>
    <name type="scientific">Burkholderia pseudomallei (strain K96243)</name>
    <dbReference type="NCBI Taxonomy" id="272560"/>
    <lineage>
        <taxon>Bacteria</taxon>
        <taxon>Pseudomonadati</taxon>
        <taxon>Pseudomonadota</taxon>
        <taxon>Betaproteobacteria</taxon>
        <taxon>Burkholderiales</taxon>
        <taxon>Burkholderiaceae</taxon>
        <taxon>Burkholderia</taxon>
        <taxon>pseudomallei group</taxon>
    </lineage>
</organism>
<reference key="1">
    <citation type="journal article" date="2004" name="Proc. Natl. Acad. Sci. U.S.A.">
        <title>Genomic plasticity of the causative agent of melioidosis, Burkholderia pseudomallei.</title>
        <authorList>
            <person name="Holden M.T.G."/>
            <person name="Titball R.W."/>
            <person name="Peacock S.J."/>
            <person name="Cerdeno-Tarraga A.-M."/>
            <person name="Atkins T."/>
            <person name="Crossman L.C."/>
            <person name="Pitt T."/>
            <person name="Churcher C."/>
            <person name="Mungall K.L."/>
            <person name="Bentley S.D."/>
            <person name="Sebaihia M."/>
            <person name="Thomson N.R."/>
            <person name="Bason N."/>
            <person name="Beacham I.R."/>
            <person name="Brooks K."/>
            <person name="Brown K.A."/>
            <person name="Brown N.F."/>
            <person name="Challis G.L."/>
            <person name="Cherevach I."/>
            <person name="Chillingworth T."/>
            <person name="Cronin A."/>
            <person name="Crossett B."/>
            <person name="Davis P."/>
            <person name="DeShazer D."/>
            <person name="Feltwell T."/>
            <person name="Fraser A."/>
            <person name="Hance Z."/>
            <person name="Hauser H."/>
            <person name="Holroyd S."/>
            <person name="Jagels K."/>
            <person name="Keith K.E."/>
            <person name="Maddison M."/>
            <person name="Moule S."/>
            <person name="Price C."/>
            <person name="Quail M.A."/>
            <person name="Rabbinowitsch E."/>
            <person name="Rutherford K."/>
            <person name="Sanders M."/>
            <person name="Simmonds M."/>
            <person name="Songsivilai S."/>
            <person name="Stevens K."/>
            <person name="Tumapa S."/>
            <person name="Vesaratchavest M."/>
            <person name="Whitehead S."/>
            <person name="Yeats C."/>
            <person name="Barrell B.G."/>
            <person name="Oyston P.C.F."/>
            <person name="Parkhill J."/>
        </authorList>
    </citation>
    <scope>NUCLEOTIDE SEQUENCE [LARGE SCALE GENOMIC DNA]</scope>
    <source>
        <strain>K96243</strain>
    </source>
</reference>
<protein>
    <recommendedName>
        <fullName evidence="1">UPF0060 membrane protein BPSL1340</fullName>
    </recommendedName>
</protein>
<accession>Q63VA1</accession>
<feature type="chain" id="PRO_0000282211" description="UPF0060 membrane protein BPSL1340">
    <location>
        <begin position="1"/>
        <end position="110"/>
    </location>
</feature>
<feature type="transmembrane region" description="Helical" evidence="1">
    <location>
        <begin position="9"/>
        <end position="29"/>
    </location>
</feature>
<feature type="transmembrane region" description="Helical" evidence="1">
    <location>
        <begin position="34"/>
        <end position="54"/>
    </location>
</feature>
<feature type="transmembrane region" description="Helical" evidence="1">
    <location>
        <begin position="64"/>
        <end position="84"/>
    </location>
</feature>
<feature type="transmembrane region" description="Helical" evidence="1">
    <location>
        <begin position="86"/>
        <end position="106"/>
    </location>
</feature>
<comment type="subcellular location">
    <subcellularLocation>
        <location evidence="1">Cell inner membrane</location>
        <topology evidence="1">Multi-pass membrane protein</topology>
    </subcellularLocation>
</comment>
<comment type="similarity">
    <text evidence="1">Belongs to the UPF0060 family.</text>
</comment>
<name>Y1340_BURPS</name>
<gene>
    <name type="ordered locus">BPSL1340</name>
</gene>
<sequence>MLSLAKIAALFVLTAVAEIVGCYLPWLVLKAGKPAWLLAPAALSLALFAWLLTLHPAAAARTYAAYGGVYIAVALAWLRIVDGVPLSRWDVAGAALALAGMSVIALQPRG</sequence>
<evidence type="ECO:0000255" key="1">
    <source>
        <dbReference type="HAMAP-Rule" id="MF_00010"/>
    </source>
</evidence>
<proteinExistence type="inferred from homology"/>
<dbReference type="EMBL" id="BX571965">
    <property type="protein sequence ID" value="CAH35338.1"/>
    <property type="molecule type" value="Genomic_DNA"/>
</dbReference>
<dbReference type="RefSeq" id="WP_004193459.1">
    <property type="nucleotide sequence ID" value="NZ_CP009538.1"/>
</dbReference>
<dbReference type="RefSeq" id="YP_107965.1">
    <property type="nucleotide sequence ID" value="NC_006350.1"/>
</dbReference>
<dbReference type="SMR" id="Q63VA1"/>
<dbReference type="KEGG" id="bps:BPSL1340"/>
<dbReference type="PATRIC" id="fig|272560.51.peg.142"/>
<dbReference type="eggNOG" id="COG1742">
    <property type="taxonomic scope" value="Bacteria"/>
</dbReference>
<dbReference type="Proteomes" id="UP000000605">
    <property type="component" value="Chromosome 1"/>
</dbReference>
<dbReference type="GO" id="GO:0005886">
    <property type="term" value="C:plasma membrane"/>
    <property type="evidence" value="ECO:0007669"/>
    <property type="project" value="UniProtKB-SubCell"/>
</dbReference>
<dbReference type="HAMAP" id="MF_00010">
    <property type="entry name" value="UPF0060"/>
    <property type="match status" value="1"/>
</dbReference>
<dbReference type="InterPro" id="IPR003844">
    <property type="entry name" value="UPF0060"/>
</dbReference>
<dbReference type="NCBIfam" id="NF002586">
    <property type="entry name" value="PRK02237.1"/>
    <property type="match status" value="1"/>
</dbReference>
<dbReference type="PANTHER" id="PTHR36116">
    <property type="entry name" value="UPF0060 MEMBRANE PROTEIN YNFA"/>
    <property type="match status" value="1"/>
</dbReference>
<dbReference type="PANTHER" id="PTHR36116:SF1">
    <property type="entry name" value="UPF0060 MEMBRANE PROTEIN YNFA"/>
    <property type="match status" value="1"/>
</dbReference>
<dbReference type="Pfam" id="PF02694">
    <property type="entry name" value="UPF0060"/>
    <property type="match status" value="1"/>
</dbReference>
<dbReference type="SUPFAM" id="SSF103481">
    <property type="entry name" value="Multidrug resistance efflux transporter EmrE"/>
    <property type="match status" value="1"/>
</dbReference>
<keyword id="KW-0997">Cell inner membrane</keyword>
<keyword id="KW-1003">Cell membrane</keyword>
<keyword id="KW-0472">Membrane</keyword>
<keyword id="KW-1185">Reference proteome</keyword>
<keyword id="KW-0812">Transmembrane</keyword>
<keyword id="KW-1133">Transmembrane helix</keyword>